<dbReference type="EMBL" id="CP000512">
    <property type="protein sequence ID" value="ABM30942.1"/>
    <property type="molecule type" value="Genomic_DNA"/>
</dbReference>
<dbReference type="RefSeq" id="WP_011793520.1">
    <property type="nucleotide sequence ID" value="NC_008752.1"/>
</dbReference>
<dbReference type="SMR" id="A1TJ04"/>
<dbReference type="STRING" id="397945.Aave_0335"/>
<dbReference type="GeneID" id="79790140"/>
<dbReference type="KEGG" id="aav:Aave_0335"/>
<dbReference type="eggNOG" id="COG0480">
    <property type="taxonomic scope" value="Bacteria"/>
</dbReference>
<dbReference type="HOGENOM" id="CLU_002794_4_1_4"/>
<dbReference type="OrthoDB" id="9804431at2"/>
<dbReference type="Proteomes" id="UP000002596">
    <property type="component" value="Chromosome"/>
</dbReference>
<dbReference type="GO" id="GO:0005737">
    <property type="term" value="C:cytoplasm"/>
    <property type="evidence" value="ECO:0007669"/>
    <property type="project" value="UniProtKB-SubCell"/>
</dbReference>
<dbReference type="GO" id="GO:0005525">
    <property type="term" value="F:GTP binding"/>
    <property type="evidence" value="ECO:0007669"/>
    <property type="project" value="UniProtKB-UniRule"/>
</dbReference>
<dbReference type="GO" id="GO:0003924">
    <property type="term" value="F:GTPase activity"/>
    <property type="evidence" value="ECO:0007669"/>
    <property type="project" value="InterPro"/>
</dbReference>
<dbReference type="GO" id="GO:0097216">
    <property type="term" value="F:guanosine tetraphosphate binding"/>
    <property type="evidence" value="ECO:0007669"/>
    <property type="project" value="UniProtKB-ARBA"/>
</dbReference>
<dbReference type="GO" id="GO:0003746">
    <property type="term" value="F:translation elongation factor activity"/>
    <property type="evidence" value="ECO:0007669"/>
    <property type="project" value="UniProtKB-UniRule"/>
</dbReference>
<dbReference type="GO" id="GO:0032790">
    <property type="term" value="P:ribosome disassembly"/>
    <property type="evidence" value="ECO:0007669"/>
    <property type="project" value="TreeGrafter"/>
</dbReference>
<dbReference type="CDD" id="cd01886">
    <property type="entry name" value="EF-G"/>
    <property type="match status" value="1"/>
</dbReference>
<dbReference type="CDD" id="cd16262">
    <property type="entry name" value="EFG_III"/>
    <property type="match status" value="1"/>
</dbReference>
<dbReference type="CDD" id="cd01434">
    <property type="entry name" value="EFG_mtEFG1_IV"/>
    <property type="match status" value="1"/>
</dbReference>
<dbReference type="CDD" id="cd03713">
    <property type="entry name" value="EFG_mtEFG_C"/>
    <property type="match status" value="1"/>
</dbReference>
<dbReference type="CDD" id="cd04088">
    <property type="entry name" value="EFG_mtEFG_II"/>
    <property type="match status" value="1"/>
</dbReference>
<dbReference type="FunFam" id="2.40.30.10:FF:000006">
    <property type="entry name" value="Elongation factor G"/>
    <property type="match status" value="1"/>
</dbReference>
<dbReference type="FunFam" id="3.30.230.10:FF:000003">
    <property type="entry name" value="Elongation factor G"/>
    <property type="match status" value="1"/>
</dbReference>
<dbReference type="FunFam" id="3.30.70.240:FF:000001">
    <property type="entry name" value="Elongation factor G"/>
    <property type="match status" value="1"/>
</dbReference>
<dbReference type="FunFam" id="3.30.70.870:FF:000001">
    <property type="entry name" value="Elongation factor G"/>
    <property type="match status" value="1"/>
</dbReference>
<dbReference type="FunFam" id="3.40.50.300:FF:000029">
    <property type="entry name" value="Elongation factor G"/>
    <property type="match status" value="1"/>
</dbReference>
<dbReference type="Gene3D" id="3.30.230.10">
    <property type="match status" value="1"/>
</dbReference>
<dbReference type="Gene3D" id="3.30.70.240">
    <property type="match status" value="1"/>
</dbReference>
<dbReference type="Gene3D" id="3.30.70.870">
    <property type="entry name" value="Elongation Factor G (Translational Gtpase), domain 3"/>
    <property type="match status" value="1"/>
</dbReference>
<dbReference type="Gene3D" id="3.40.50.300">
    <property type="entry name" value="P-loop containing nucleotide triphosphate hydrolases"/>
    <property type="match status" value="1"/>
</dbReference>
<dbReference type="Gene3D" id="2.40.30.10">
    <property type="entry name" value="Translation factors"/>
    <property type="match status" value="1"/>
</dbReference>
<dbReference type="HAMAP" id="MF_00054_B">
    <property type="entry name" value="EF_G_EF_2_B"/>
    <property type="match status" value="1"/>
</dbReference>
<dbReference type="InterPro" id="IPR041095">
    <property type="entry name" value="EFG_II"/>
</dbReference>
<dbReference type="InterPro" id="IPR009022">
    <property type="entry name" value="EFG_III"/>
</dbReference>
<dbReference type="InterPro" id="IPR035647">
    <property type="entry name" value="EFG_III/V"/>
</dbReference>
<dbReference type="InterPro" id="IPR047872">
    <property type="entry name" value="EFG_IV"/>
</dbReference>
<dbReference type="InterPro" id="IPR035649">
    <property type="entry name" value="EFG_V"/>
</dbReference>
<dbReference type="InterPro" id="IPR000640">
    <property type="entry name" value="EFG_V-like"/>
</dbReference>
<dbReference type="InterPro" id="IPR004161">
    <property type="entry name" value="EFTu-like_2"/>
</dbReference>
<dbReference type="InterPro" id="IPR031157">
    <property type="entry name" value="G_TR_CS"/>
</dbReference>
<dbReference type="InterPro" id="IPR027417">
    <property type="entry name" value="P-loop_NTPase"/>
</dbReference>
<dbReference type="InterPro" id="IPR020568">
    <property type="entry name" value="Ribosomal_Su5_D2-typ_SF"/>
</dbReference>
<dbReference type="InterPro" id="IPR014721">
    <property type="entry name" value="Ribsml_uS5_D2-typ_fold_subgr"/>
</dbReference>
<dbReference type="InterPro" id="IPR005225">
    <property type="entry name" value="Small_GTP-bd"/>
</dbReference>
<dbReference type="InterPro" id="IPR000795">
    <property type="entry name" value="T_Tr_GTP-bd_dom"/>
</dbReference>
<dbReference type="InterPro" id="IPR009000">
    <property type="entry name" value="Transl_B-barrel_sf"/>
</dbReference>
<dbReference type="InterPro" id="IPR004540">
    <property type="entry name" value="Transl_elong_EFG/EF2"/>
</dbReference>
<dbReference type="InterPro" id="IPR005517">
    <property type="entry name" value="Transl_elong_EFG/EF2_IV"/>
</dbReference>
<dbReference type="NCBIfam" id="TIGR00484">
    <property type="entry name" value="EF-G"/>
    <property type="match status" value="1"/>
</dbReference>
<dbReference type="NCBIfam" id="NF009381">
    <property type="entry name" value="PRK12740.1-5"/>
    <property type="match status" value="1"/>
</dbReference>
<dbReference type="NCBIfam" id="TIGR00231">
    <property type="entry name" value="small_GTP"/>
    <property type="match status" value="1"/>
</dbReference>
<dbReference type="PANTHER" id="PTHR43261:SF1">
    <property type="entry name" value="RIBOSOME-RELEASING FACTOR 2, MITOCHONDRIAL"/>
    <property type="match status" value="1"/>
</dbReference>
<dbReference type="PANTHER" id="PTHR43261">
    <property type="entry name" value="TRANSLATION ELONGATION FACTOR G-RELATED"/>
    <property type="match status" value="1"/>
</dbReference>
<dbReference type="Pfam" id="PF00679">
    <property type="entry name" value="EFG_C"/>
    <property type="match status" value="1"/>
</dbReference>
<dbReference type="Pfam" id="PF14492">
    <property type="entry name" value="EFG_III"/>
    <property type="match status" value="1"/>
</dbReference>
<dbReference type="Pfam" id="PF03764">
    <property type="entry name" value="EFG_IV"/>
    <property type="match status" value="1"/>
</dbReference>
<dbReference type="Pfam" id="PF00009">
    <property type="entry name" value="GTP_EFTU"/>
    <property type="match status" value="1"/>
</dbReference>
<dbReference type="Pfam" id="PF03144">
    <property type="entry name" value="GTP_EFTU_D2"/>
    <property type="match status" value="1"/>
</dbReference>
<dbReference type="PRINTS" id="PR00315">
    <property type="entry name" value="ELONGATNFCT"/>
</dbReference>
<dbReference type="SMART" id="SM00838">
    <property type="entry name" value="EFG_C"/>
    <property type="match status" value="1"/>
</dbReference>
<dbReference type="SMART" id="SM00889">
    <property type="entry name" value="EFG_IV"/>
    <property type="match status" value="1"/>
</dbReference>
<dbReference type="SUPFAM" id="SSF54980">
    <property type="entry name" value="EF-G C-terminal domain-like"/>
    <property type="match status" value="2"/>
</dbReference>
<dbReference type="SUPFAM" id="SSF52540">
    <property type="entry name" value="P-loop containing nucleoside triphosphate hydrolases"/>
    <property type="match status" value="1"/>
</dbReference>
<dbReference type="SUPFAM" id="SSF54211">
    <property type="entry name" value="Ribosomal protein S5 domain 2-like"/>
    <property type="match status" value="1"/>
</dbReference>
<dbReference type="SUPFAM" id="SSF50447">
    <property type="entry name" value="Translation proteins"/>
    <property type="match status" value="1"/>
</dbReference>
<dbReference type="PROSITE" id="PS00301">
    <property type="entry name" value="G_TR_1"/>
    <property type="match status" value="1"/>
</dbReference>
<dbReference type="PROSITE" id="PS51722">
    <property type="entry name" value="G_TR_2"/>
    <property type="match status" value="1"/>
</dbReference>
<name>EFG_PARC0</name>
<feature type="chain" id="PRO_1000008795" description="Elongation factor G">
    <location>
        <begin position="1"/>
        <end position="700"/>
    </location>
</feature>
<feature type="domain" description="tr-type G">
    <location>
        <begin position="8"/>
        <end position="290"/>
    </location>
</feature>
<feature type="binding site" evidence="1">
    <location>
        <begin position="17"/>
        <end position="24"/>
    </location>
    <ligand>
        <name>GTP</name>
        <dbReference type="ChEBI" id="CHEBI:37565"/>
    </ligand>
</feature>
<feature type="binding site" evidence="1">
    <location>
        <begin position="88"/>
        <end position="92"/>
    </location>
    <ligand>
        <name>GTP</name>
        <dbReference type="ChEBI" id="CHEBI:37565"/>
    </ligand>
</feature>
<feature type="binding site" evidence="1">
    <location>
        <begin position="142"/>
        <end position="145"/>
    </location>
    <ligand>
        <name>GTP</name>
        <dbReference type="ChEBI" id="CHEBI:37565"/>
    </ligand>
</feature>
<reference key="1">
    <citation type="submission" date="2006-12" db="EMBL/GenBank/DDBJ databases">
        <title>Complete sequence of Acidovorax avenae subsp. citrulli AAC00-1.</title>
        <authorList>
            <person name="Copeland A."/>
            <person name="Lucas S."/>
            <person name="Lapidus A."/>
            <person name="Barry K."/>
            <person name="Detter J.C."/>
            <person name="Glavina del Rio T."/>
            <person name="Dalin E."/>
            <person name="Tice H."/>
            <person name="Pitluck S."/>
            <person name="Kiss H."/>
            <person name="Brettin T."/>
            <person name="Bruce D."/>
            <person name="Han C."/>
            <person name="Tapia R."/>
            <person name="Gilna P."/>
            <person name="Schmutz J."/>
            <person name="Larimer F."/>
            <person name="Land M."/>
            <person name="Hauser L."/>
            <person name="Kyrpides N."/>
            <person name="Kim E."/>
            <person name="Stahl D."/>
            <person name="Richardson P."/>
        </authorList>
    </citation>
    <scope>NUCLEOTIDE SEQUENCE [LARGE SCALE GENOMIC DNA]</scope>
    <source>
        <strain>AAC00-1</strain>
    </source>
</reference>
<sequence>MARKTPIERYRNIGISAHIDAGKTTTTERILFYTGVNHKIGEVHDGAATMDWMEQEQERGITITSAATTCFWKGMDMSYPEHRFNIIDTPGHVDFTIEVERSMRVLDGACMVYCAVGGVQPQSETVWRQANKYKVPRLAFVNKMDRTGANFFKVYDQMRLRLKANPVPVVIPIGAEEGFKGVVDLLKMKAIIWDEASQGMKFNYEEIPADLAESAKEWREKMVEAAAEASEELMNKYLEEGDLSEEEIKLGLRTRTIATEIQPMLCGTAFKNKGVQRMLDAVIDYLPSPVDIPPVAGTDEDEAETTRKADDNEKFSALAFKLMTDPFVGQLTFVRVYSGVLSKGDSVYNPVKGKKERIGRIVQMHANERLEVEEIRAGDIAACVGLKDVTTGETLCDPEAIVTLERMVFPEPVIAQAVEPKTKTDQEKMGIALQRLAAEDPSFRVKTDEESGQTIISGMGELHLEIIVDRMKREFGVEANVGKPQVAYRETIRKTVEEAEGKFVRQSGGKGQYGHVVLKIEPNEAGKGIEFVDAIKGGVVPREFIPAVEKGINEAVTQGVLAGYPVVDVKVTLHFGSYHDVDSNELAFKMAAIFGFKEGCKKAGPVILEPMMAVEVETPEDYAGTVMGDLSSRRGMVQGMDDMVGGGKAIKAEVPLSEMFGYSTALRSATQGRATYTMEFKHYSEAPRNVSEAIMAARAK</sequence>
<evidence type="ECO:0000255" key="1">
    <source>
        <dbReference type="HAMAP-Rule" id="MF_00054"/>
    </source>
</evidence>
<accession>A1TJ04</accession>
<protein>
    <recommendedName>
        <fullName evidence="1">Elongation factor G</fullName>
        <shortName evidence="1">EF-G</shortName>
    </recommendedName>
</protein>
<comment type="function">
    <text evidence="1">Catalyzes the GTP-dependent ribosomal translocation step during translation elongation. During this step, the ribosome changes from the pre-translocational (PRE) to the post-translocational (POST) state as the newly formed A-site-bound peptidyl-tRNA and P-site-bound deacylated tRNA move to the P and E sites, respectively. Catalyzes the coordinated movement of the two tRNA molecules, the mRNA and conformational changes in the ribosome.</text>
</comment>
<comment type="subcellular location">
    <subcellularLocation>
        <location evidence="1">Cytoplasm</location>
    </subcellularLocation>
</comment>
<comment type="similarity">
    <text evidence="1">Belongs to the TRAFAC class translation factor GTPase superfamily. Classic translation factor GTPase family. EF-G/EF-2 subfamily.</text>
</comment>
<gene>
    <name evidence="1" type="primary">fusA</name>
    <name type="ordered locus">Aave_0335</name>
</gene>
<proteinExistence type="inferred from homology"/>
<organism>
    <name type="scientific">Paracidovorax citrulli (strain AAC00-1)</name>
    <name type="common">Acidovorax citrulli</name>
    <dbReference type="NCBI Taxonomy" id="397945"/>
    <lineage>
        <taxon>Bacteria</taxon>
        <taxon>Pseudomonadati</taxon>
        <taxon>Pseudomonadota</taxon>
        <taxon>Betaproteobacteria</taxon>
        <taxon>Burkholderiales</taxon>
        <taxon>Comamonadaceae</taxon>
        <taxon>Paracidovorax</taxon>
    </lineage>
</organism>
<keyword id="KW-0963">Cytoplasm</keyword>
<keyword id="KW-0251">Elongation factor</keyword>
<keyword id="KW-0342">GTP-binding</keyword>
<keyword id="KW-0547">Nucleotide-binding</keyword>
<keyword id="KW-0648">Protein biosynthesis</keyword>